<proteinExistence type="evidence at transcript level"/>
<name>CYNS_SOYBN</name>
<organism>
    <name type="scientific">Glycine max</name>
    <name type="common">Soybean</name>
    <name type="synonym">Glycine hispida</name>
    <dbReference type="NCBI Taxonomy" id="3847"/>
    <lineage>
        <taxon>Eukaryota</taxon>
        <taxon>Viridiplantae</taxon>
        <taxon>Streptophyta</taxon>
        <taxon>Embryophyta</taxon>
        <taxon>Tracheophyta</taxon>
        <taxon>Spermatophyta</taxon>
        <taxon>Magnoliopsida</taxon>
        <taxon>eudicotyledons</taxon>
        <taxon>Gunneridae</taxon>
        <taxon>Pentapetalae</taxon>
        <taxon>rosids</taxon>
        <taxon>fabids</taxon>
        <taxon>Fabales</taxon>
        <taxon>Fabaceae</taxon>
        <taxon>Papilionoideae</taxon>
        <taxon>50 kb inversion clade</taxon>
        <taxon>NPAAA clade</taxon>
        <taxon>indigoferoid/millettioid clade</taxon>
        <taxon>Phaseoleae</taxon>
        <taxon>Glycine</taxon>
        <taxon>Glycine subgen. Soja</taxon>
    </lineage>
</organism>
<protein>
    <recommendedName>
        <fullName evidence="1">Cyanate hydratase</fullName>
        <shortName evidence="1">Cyanase</shortName>
        <ecNumber evidence="1">4.2.1.104</ecNumber>
    </recommendedName>
    <alternativeName>
        <fullName evidence="1">Cyanate hydrolase</fullName>
    </alternativeName>
    <alternativeName>
        <fullName evidence="1">Cyanate lyase</fullName>
    </alternativeName>
</protein>
<keyword id="KW-0456">Lyase</keyword>
<keyword id="KW-1185">Reference proteome</keyword>
<evidence type="ECO:0000255" key="1">
    <source>
        <dbReference type="HAMAP-Rule" id="MF_03139"/>
    </source>
</evidence>
<accession>C6SXE1</accession>
<dbReference type="EC" id="4.2.1.104" evidence="1"/>
<dbReference type="EMBL" id="BT089835">
    <property type="protein sequence ID" value="ACU13914.1"/>
    <property type="molecule type" value="mRNA"/>
</dbReference>
<dbReference type="RefSeq" id="NP_001235635.1">
    <property type="nucleotide sequence ID" value="NM_001248706.2"/>
</dbReference>
<dbReference type="SMR" id="C6SXE1"/>
<dbReference type="FunCoup" id="C6SXE1">
    <property type="interactions" value="1911"/>
</dbReference>
<dbReference type="STRING" id="3847.C6SXE1"/>
<dbReference type="PaxDb" id="3847-GLYMA10G00790.1"/>
<dbReference type="GeneID" id="100305967"/>
<dbReference type="KEGG" id="gmx:100305967"/>
<dbReference type="eggNOG" id="ENOG502RY7W">
    <property type="taxonomic scope" value="Eukaryota"/>
</dbReference>
<dbReference type="InParanoid" id="C6SXE1"/>
<dbReference type="OrthoDB" id="10019422at2759"/>
<dbReference type="Proteomes" id="UP000008827">
    <property type="component" value="Unplaced"/>
</dbReference>
<dbReference type="GO" id="GO:0008824">
    <property type="term" value="F:cyanate hydratase activity"/>
    <property type="evidence" value="ECO:0007669"/>
    <property type="project" value="UniProtKB-UniRule"/>
</dbReference>
<dbReference type="GO" id="GO:0003677">
    <property type="term" value="F:DNA binding"/>
    <property type="evidence" value="ECO:0007669"/>
    <property type="project" value="InterPro"/>
</dbReference>
<dbReference type="GO" id="GO:0009439">
    <property type="term" value="P:cyanate metabolic process"/>
    <property type="evidence" value="ECO:0007669"/>
    <property type="project" value="UniProtKB-UniRule"/>
</dbReference>
<dbReference type="CDD" id="cd00559">
    <property type="entry name" value="Cyanase_C"/>
    <property type="match status" value="1"/>
</dbReference>
<dbReference type="FunFam" id="3.30.1160.10:FF:000002">
    <property type="entry name" value="Cyanate hydratase"/>
    <property type="match status" value="1"/>
</dbReference>
<dbReference type="Gene3D" id="3.30.1160.10">
    <property type="entry name" value="Cyanate lyase, C-terminal domain"/>
    <property type="match status" value="1"/>
</dbReference>
<dbReference type="Gene3D" id="1.10.260.40">
    <property type="entry name" value="lambda repressor-like DNA-binding domains"/>
    <property type="match status" value="1"/>
</dbReference>
<dbReference type="HAMAP" id="MF_00535">
    <property type="entry name" value="Cyanate_hydrat"/>
    <property type="match status" value="1"/>
</dbReference>
<dbReference type="InterPro" id="IPR008076">
    <property type="entry name" value="Cyanase"/>
</dbReference>
<dbReference type="InterPro" id="IPR003712">
    <property type="entry name" value="Cyanate_lyase_C"/>
</dbReference>
<dbReference type="InterPro" id="IPR036581">
    <property type="entry name" value="Cyanate_lyase_C_sf"/>
</dbReference>
<dbReference type="InterPro" id="IPR010982">
    <property type="entry name" value="Lambda_DNA-bd_dom_sf"/>
</dbReference>
<dbReference type="PANTHER" id="PTHR34186">
    <property type="entry name" value="CYANATE HYDRATASE"/>
    <property type="match status" value="1"/>
</dbReference>
<dbReference type="PANTHER" id="PTHR34186:SF2">
    <property type="entry name" value="CYANATE HYDRATASE"/>
    <property type="match status" value="1"/>
</dbReference>
<dbReference type="Pfam" id="PF02560">
    <property type="entry name" value="Cyanate_lyase"/>
    <property type="match status" value="1"/>
</dbReference>
<dbReference type="PIRSF" id="PIRSF001263">
    <property type="entry name" value="Cyanate_hydratas"/>
    <property type="match status" value="1"/>
</dbReference>
<dbReference type="PRINTS" id="PR01693">
    <property type="entry name" value="CYANASE"/>
</dbReference>
<dbReference type="SMART" id="SM01116">
    <property type="entry name" value="Cyanate_lyase"/>
    <property type="match status" value="1"/>
</dbReference>
<dbReference type="SUPFAM" id="SSF55234">
    <property type="entry name" value="Cyanase C-terminal domain"/>
    <property type="match status" value="1"/>
</dbReference>
<dbReference type="SUPFAM" id="SSF47413">
    <property type="entry name" value="lambda repressor-like DNA-binding domains"/>
    <property type="match status" value="1"/>
</dbReference>
<comment type="function">
    <text evidence="1">Catalyzes the reaction of cyanate with bicarbonate to produce ammonia and carbon dioxide.</text>
</comment>
<comment type="catalytic activity">
    <reaction evidence="1">
        <text>cyanate + hydrogencarbonate + 3 H(+) = NH4(+) + 2 CO2</text>
        <dbReference type="Rhea" id="RHEA:11120"/>
        <dbReference type="ChEBI" id="CHEBI:15378"/>
        <dbReference type="ChEBI" id="CHEBI:16526"/>
        <dbReference type="ChEBI" id="CHEBI:17544"/>
        <dbReference type="ChEBI" id="CHEBI:28938"/>
        <dbReference type="ChEBI" id="CHEBI:29195"/>
        <dbReference type="EC" id="4.2.1.104"/>
    </reaction>
</comment>
<comment type="similarity">
    <text evidence="1">Belongs to the cyanase family.</text>
</comment>
<feature type="chain" id="PRO_0000403222" description="Cyanate hydratase">
    <location>
        <begin position="1"/>
        <end position="165"/>
    </location>
</feature>
<feature type="active site" evidence="1">
    <location>
        <position position="90"/>
    </location>
</feature>
<feature type="active site" evidence="1">
    <location>
        <position position="93"/>
    </location>
</feature>
<feature type="active site" evidence="1">
    <location>
        <position position="116"/>
    </location>
</feature>
<gene>
    <name evidence="1" type="primary">CYN</name>
</gene>
<reference key="1">
    <citation type="submission" date="2009-08" db="EMBL/GenBank/DDBJ databases">
        <authorList>
            <person name="Cheung F."/>
            <person name="Xiao Y."/>
            <person name="Chan A."/>
            <person name="Moskal W."/>
            <person name="Town C.D."/>
        </authorList>
    </citation>
    <scope>NUCLEOTIDE SEQUENCE [MRNA]</scope>
</reference>
<sequence length="165" mass="18665">MERKKAKIVAELQAVKHNSGKSYNQLAEETGLTNVYVAQLLRRQAQLNPQTAPLLRAALPDLPQDLVPEMMRPPLRSYDPNLIQDPTVYRLNEAVMHFGESIKEIINEEFGDGTMSAIDFYCSVDKIKGVDGKDRVVLTFDGKYLPHSEQKSEHMVSRTRPLGKQ</sequence>